<accession>Q8Y236</accession>
<name>RUVB_RALN1</name>
<protein>
    <recommendedName>
        <fullName evidence="1">Holliday junction branch migration complex subunit RuvB</fullName>
        <ecNumber evidence="1">3.6.4.-</ecNumber>
    </recommendedName>
</protein>
<organism>
    <name type="scientific">Ralstonia nicotianae (strain ATCC BAA-1114 / GMI1000)</name>
    <name type="common">Ralstonia solanacearum</name>
    <dbReference type="NCBI Taxonomy" id="267608"/>
    <lineage>
        <taxon>Bacteria</taxon>
        <taxon>Pseudomonadati</taxon>
        <taxon>Pseudomonadota</taxon>
        <taxon>Betaproteobacteria</taxon>
        <taxon>Burkholderiales</taxon>
        <taxon>Burkholderiaceae</taxon>
        <taxon>Ralstonia</taxon>
        <taxon>Ralstonia solanacearum species complex</taxon>
    </lineage>
</organism>
<dbReference type="EC" id="3.6.4.-" evidence="1"/>
<dbReference type="EMBL" id="AL646052">
    <property type="protein sequence ID" value="CAD14028.1"/>
    <property type="molecule type" value="Genomic_DNA"/>
</dbReference>
<dbReference type="RefSeq" id="WP_011000459.1">
    <property type="nucleotide sequence ID" value="NC_003295.1"/>
</dbReference>
<dbReference type="SMR" id="Q8Y236"/>
<dbReference type="STRING" id="267608.RSc0500"/>
<dbReference type="EnsemblBacteria" id="CAD14028">
    <property type="protein sequence ID" value="CAD14028"/>
    <property type="gene ID" value="RSc0500"/>
</dbReference>
<dbReference type="KEGG" id="rso:RSc0500"/>
<dbReference type="eggNOG" id="COG2255">
    <property type="taxonomic scope" value="Bacteria"/>
</dbReference>
<dbReference type="HOGENOM" id="CLU_055599_1_0_4"/>
<dbReference type="Proteomes" id="UP000001436">
    <property type="component" value="Chromosome"/>
</dbReference>
<dbReference type="GO" id="GO:0005737">
    <property type="term" value="C:cytoplasm"/>
    <property type="evidence" value="ECO:0007669"/>
    <property type="project" value="UniProtKB-SubCell"/>
</dbReference>
<dbReference type="GO" id="GO:0048476">
    <property type="term" value="C:Holliday junction resolvase complex"/>
    <property type="evidence" value="ECO:0007669"/>
    <property type="project" value="UniProtKB-UniRule"/>
</dbReference>
<dbReference type="GO" id="GO:0005524">
    <property type="term" value="F:ATP binding"/>
    <property type="evidence" value="ECO:0007669"/>
    <property type="project" value="UniProtKB-UniRule"/>
</dbReference>
<dbReference type="GO" id="GO:0016887">
    <property type="term" value="F:ATP hydrolysis activity"/>
    <property type="evidence" value="ECO:0007669"/>
    <property type="project" value="InterPro"/>
</dbReference>
<dbReference type="GO" id="GO:0000400">
    <property type="term" value="F:four-way junction DNA binding"/>
    <property type="evidence" value="ECO:0007669"/>
    <property type="project" value="UniProtKB-UniRule"/>
</dbReference>
<dbReference type="GO" id="GO:0009378">
    <property type="term" value="F:four-way junction helicase activity"/>
    <property type="evidence" value="ECO:0007669"/>
    <property type="project" value="InterPro"/>
</dbReference>
<dbReference type="GO" id="GO:0006310">
    <property type="term" value="P:DNA recombination"/>
    <property type="evidence" value="ECO:0007669"/>
    <property type="project" value="UniProtKB-UniRule"/>
</dbReference>
<dbReference type="GO" id="GO:0006281">
    <property type="term" value="P:DNA repair"/>
    <property type="evidence" value="ECO:0007669"/>
    <property type="project" value="UniProtKB-UniRule"/>
</dbReference>
<dbReference type="CDD" id="cd00009">
    <property type="entry name" value="AAA"/>
    <property type="match status" value="1"/>
</dbReference>
<dbReference type="FunFam" id="1.10.10.10:FF:000086">
    <property type="entry name" value="Holliday junction ATP-dependent DNA helicase RuvB"/>
    <property type="match status" value="1"/>
</dbReference>
<dbReference type="FunFam" id="1.10.8.60:FF:000023">
    <property type="entry name" value="Holliday junction ATP-dependent DNA helicase RuvB"/>
    <property type="match status" value="1"/>
</dbReference>
<dbReference type="FunFam" id="3.40.50.300:FF:000073">
    <property type="entry name" value="Holliday junction ATP-dependent DNA helicase RuvB"/>
    <property type="match status" value="1"/>
</dbReference>
<dbReference type="Gene3D" id="1.10.8.60">
    <property type="match status" value="1"/>
</dbReference>
<dbReference type="Gene3D" id="3.40.50.300">
    <property type="entry name" value="P-loop containing nucleotide triphosphate hydrolases"/>
    <property type="match status" value="1"/>
</dbReference>
<dbReference type="Gene3D" id="1.10.10.10">
    <property type="entry name" value="Winged helix-like DNA-binding domain superfamily/Winged helix DNA-binding domain"/>
    <property type="match status" value="1"/>
</dbReference>
<dbReference type="HAMAP" id="MF_00016">
    <property type="entry name" value="DNA_HJ_migration_RuvB"/>
    <property type="match status" value="1"/>
</dbReference>
<dbReference type="InterPro" id="IPR003593">
    <property type="entry name" value="AAA+_ATPase"/>
</dbReference>
<dbReference type="InterPro" id="IPR041445">
    <property type="entry name" value="AAA_lid_4"/>
</dbReference>
<dbReference type="InterPro" id="IPR004605">
    <property type="entry name" value="DNA_helicase_Holl-junc_RuvB"/>
</dbReference>
<dbReference type="InterPro" id="IPR027417">
    <property type="entry name" value="P-loop_NTPase"/>
</dbReference>
<dbReference type="InterPro" id="IPR008824">
    <property type="entry name" value="RuvB-like_N"/>
</dbReference>
<dbReference type="InterPro" id="IPR008823">
    <property type="entry name" value="RuvB_C"/>
</dbReference>
<dbReference type="InterPro" id="IPR036388">
    <property type="entry name" value="WH-like_DNA-bd_sf"/>
</dbReference>
<dbReference type="InterPro" id="IPR036390">
    <property type="entry name" value="WH_DNA-bd_sf"/>
</dbReference>
<dbReference type="NCBIfam" id="NF000868">
    <property type="entry name" value="PRK00080.1"/>
    <property type="match status" value="1"/>
</dbReference>
<dbReference type="NCBIfam" id="TIGR00635">
    <property type="entry name" value="ruvB"/>
    <property type="match status" value="1"/>
</dbReference>
<dbReference type="PANTHER" id="PTHR42848">
    <property type="match status" value="1"/>
</dbReference>
<dbReference type="PANTHER" id="PTHR42848:SF1">
    <property type="entry name" value="HOLLIDAY JUNCTION BRANCH MIGRATION COMPLEX SUBUNIT RUVB"/>
    <property type="match status" value="1"/>
</dbReference>
<dbReference type="Pfam" id="PF17864">
    <property type="entry name" value="AAA_lid_4"/>
    <property type="match status" value="1"/>
</dbReference>
<dbReference type="Pfam" id="PF05491">
    <property type="entry name" value="RuvB_C"/>
    <property type="match status" value="1"/>
</dbReference>
<dbReference type="Pfam" id="PF05496">
    <property type="entry name" value="RuvB_N"/>
    <property type="match status" value="1"/>
</dbReference>
<dbReference type="PRINTS" id="PR00830">
    <property type="entry name" value="ENDOLAPTASE"/>
</dbReference>
<dbReference type="SMART" id="SM00382">
    <property type="entry name" value="AAA"/>
    <property type="match status" value="1"/>
</dbReference>
<dbReference type="SUPFAM" id="SSF52540">
    <property type="entry name" value="P-loop containing nucleoside triphosphate hydrolases"/>
    <property type="match status" value="1"/>
</dbReference>
<dbReference type="SUPFAM" id="SSF46785">
    <property type="entry name" value="Winged helix' DNA-binding domain"/>
    <property type="match status" value="1"/>
</dbReference>
<comment type="function">
    <text evidence="1">The RuvA-RuvB-RuvC complex processes Holliday junction (HJ) DNA during genetic recombination and DNA repair, while the RuvA-RuvB complex plays an important role in the rescue of blocked DNA replication forks via replication fork reversal (RFR). RuvA specifically binds to HJ cruciform DNA, conferring on it an open structure. The RuvB hexamer acts as an ATP-dependent pump, pulling dsDNA into and through the RuvAB complex. RuvB forms 2 homohexamers on either side of HJ DNA bound by 1 or 2 RuvA tetramers; 4 subunits per hexamer contact DNA at a time. Coordinated motions by a converter formed by DNA-disengaged RuvB subunits stimulates ATP hydrolysis and nucleotide exchange. Immobilization of the converter enables RuvB to convert the ATP-contained energy into a lever motion, pulling 2 nucleotides of DNA out of the RuvA tetramer per ATP hydrolyzed, thus driving DNA branch migration. The RuvB motors rotate together with the DNA substrate, which together with the progressing nucleotide cycle form the mechanistic basis for DNA recombination by continuous HJ branch migration. Branch migration allows RuvC to scan DNA until it finds its consensus sequence, where it cleaves and resolves cruciform DNA.</text>
</comment>
<comment type="catalytic activity">
    <reaction evidence="1">
        <text>ATP + H2O = ADP + phosphate + H(+)</text>
        <dbReference type="Rhea" id="RHEA:13065"/>
        <dbReference type="ChEBI" id="CHEBI:15377"/>
        <dbReference type="ChEBI" id="CHEBI:15378"/>
        <dbReference type="ChEBI" id="CHEBI:30616"/>
        <dbReference type="ChEBI" id="CHEBI:43474"/>
        <dbReference type="ChEBI" id="CHEBI:456216"/>
    </reaction>
</comment>
<comment type="subunit">
    <text evidence="1">Homohexamer. Forms an RuvA(8)-RuvB(12)-Holliday junction (HJ) complex. HJ DNA is sandwiched between 2 RuvA tetramers; dsDNA enters through RuvA and exits via RuvB. An RuvB hexamer assembles on each DNA strand where it exits the tetramer. Each RuvB hexamer is contacted by two RuvA subunits (via domain III) on 2 adjacent RuvB subunits; this complex drives branch migration. In the full resolvosome a probable DNA-RuvA(4)-RuvB(12)-RuvC(2) complex forms which resolves the HJ.</text>
</comment>
<comment type="subcellular location">
    <subcellularLocation>
        <location evidence="1">Cytoplasm</location>
    </subcellularLocation>
</comment>
<comment type="domain">
    <text evidence="1">Has 3 domains, the large (RuvB-L) and small ATPase (RuvB-S) domains and the C-terminal head (RuvB-H) domain. The head domain binds DNA, while the ATPase domains jointly bind ATP, ADP or are empty depending on the state of the subunit in the translocation cycle. During a single DNA translocation step the structure of each domain remains the same, but their relative positions change.</text>
</comment>
<comment type="similarity">
    <text evidence="1">Belongs to the RuvB family.</text>
</comment>
<gene>
    <name evidence="1" type="primary">ruvB</name>
    <name type="ordered locus">RSc0500</name>
    <name type="ORF">RS05022</name>
</gene>
<sequence length="357" mass="39059">MIETDKLAAKAVSAERLISASPASPNEEAFERALRPKLLDEYVGQEKVRGQLDIFMTAAKKRREALDHVLLFGPPGLGKTTLAHIIAREMGVNLRQTSGPVLERPGDLAALLTNLEANDVLFIDEIHRLSPVVEEILYPALEDYQIDIMIGEGPAARSVKLDLQPFTLVGATTRAGMLTNPLRDRFGIVARLEFYTPTELARIVTRSAGLLDARIAEDGALEIAKRSRGTPRIANRLLRRVRDYAEVKADGVITRAVADAALAMLDVDAVGFDLMDRKLLEAILHKFNGGPVGIDNLAAAIGEERDTIEDVLEPYLIQQGYLQRTPRGRVATASAYQHFGLGAPKTGPARDLWDNNA</sequence>
<keyword id="KW-0067">ATP-binding</keyword>
<keyword id="KW-0963">Cytoplasm</keyword>
<keyword id="KW-0227">DNA damage</keyword>
<keyword id="KW-0233">DNA recombination</keyword>
<keyword id="KW-0234">DNA repair</keyword>
<keyword id="KW-0238">DNA-binding</keyword>
<keyword id="KW-0378">Hydrolase</keyword>
<keyword id="KW-0547">Nucleotide-binding</keyword>
<keyword id="KW-1185">Reference proteome</keyword>
<reference key="1">
    <citation type="journal article" date="2002" name="Nature">
        <title>Genome sequence of the plant pathogen Ralstonia solanacearum.</title>
        <authorList>
            <person name="Salanoubat M."/>
            <person name="Genin S."/>
            <person name="Artiguenave F."/>
            <person name="Gouzy J."/>
            <person name="Mangenot S."/>
            <person name="Arlat M."/>
            <person name="Billault A."/>
            <person name="Brottier P."/>
            <person name="Camus J.-C."/>
            <person name="Cattolico L."/>
            <person name="Chandler M."/>
            <person name="Choisne N."/>
            <person name="Claudel-Renard C."/>
            <person name="Cunnac S."/>
            <person name="Demange N."/>
            <person name="Gaspin C."/>
            <person name="Lavie M."/>
            <person name="Moisan A."/>
            <person name="Robert C."/>
            <person name="Saurin W."/>
            <person name="Schiex T."/>
            <person name="Siguier P."/>
            <person name="Thebault P."/>
            <person name="Whalen M."/>
            <person name="Wincker P."/>
            <person name="Levy M."/>
            <person name="Weissenbach J."/>
            <person name="Boucher C.A."/>
        </authorList>
    </citation>
    <scope>NUCLEOTIDE SEQUENCE [LARGE SCALE GENOMIC DNA]</scope>
    <source>
        <strain>ATCC BAA-1114 / GMI1000</strain>
    </source>
</reference>
<evidence type="ECO:0000255" key="1">
    <source>
        <dbReference type="HAMAP-Rule" id="MF_00016"/>
    </source>
</evidence>
<proteinExistence type="inferred from homology"/>
<feature type="chain" id="PRO_0000165581" description="Holliday junction branch migration complex subunit RuvB">
    <location>
        <begin position="1"/>
        <end position="357"/>
    </location>
</feature>
<feature type="region of interest" description="Large ATPase domain (RuvB-L)" evidence="1">
    <location>
        <begin position="4"/>
        <end position="195"/>
    </location>
</feature>
<feature type="region of interest" description="Small ATPAse domain (RuvB-S)" evidence="1">
    <location>
        <begin position="196"/>
        <end position="266"/>
    </location>
</feature>
<feature type="region of interest" description="Head domain (RuvB-H)" evidence="1">
    <location>
        <begin position="269"/>
        <end position="357"/>
    </location>
</feature>
<feature type="binding site" evidence="1">
    <location>
        <position position="34"/>
    </location>
    <ligand>
        <name>ATP</name>
        <dbReference type="ChEBI" id="CHEBI:30616"/>
    </ligand>
</feature>
<feature type="binding site" evidence="1">
    <location>
        <position position="35"/>
    </location>
    <ligand>
        <name>ATP</name>
        <dbReference type="ChEBI" id="CHEBI:30616"/>
    </ligand>
</feature>
<feature type="binding site" evidence="1">
    <location>
        <position position="76"/>
    </location>
    <ligand>
        <name>ATP</name>
        <dbReference type="ChEBI" id="CHEBI:30616"/>
    </ligand>
</feature>
<feature type="binding site" evidence="1">
    <location>
        <position position="79"/>
    </location>
    <ligand>
        <name>ATP</name>
        <dbReference type="ChEBI" id="CHEBI:30616"/>
    </ligand>
</feature>
<feature type="binding site" evidence="1">
    <location>
        <position position="80"/>
    </location>
    <ligand>
        <name>ATP</name>
        <dbReference type="ChEBI" id="CHEBI:30616"/>
    </ligand>
</feature>
<feature type="binding site" evidence="1">
    <location>
        <position position="80"/>
    </location>
    <ligand>
        <name>Mg(2+)</name>
        <dbReference type="ChEBI" id="CHEBI:18420"/>
    </ligand>
</feature>
<feature type="binding site" evidence="1">
    <location>
        <position position="81"/>
    </location>
    <ligand>
        <name>ATP</name>
        <dbReference type="ChEBI" id="CHEBI:30616"/>
    </ligand>
</feature>
<feature type="binding site" evidence="1">
    <location>
        <begin position="142"/>
        <end position="144"/>
    </location>
    <ligand>
        <name>ATP</name>
        <dbReference type="ChEBI" id="CHEBI:30616"/>
    </ligand>
</feature>
<feature type="binding site" evidence="1">
    <location>
        <position position="185"/>
    </location>
    <ligand>
        <name>ATP</name>
        <dbReference type="ChEBI" id="CHEBI:30616"/>
    </ligand>
</feature>
<feature type="binding site" evidence="1">
    <location>
        <position position="195"/>
    </location>
    <ligand>
        <name>ATP</name>
        <dbReference type="ChEBI" id="CHEBI:30616"/>
    </ligand>
</feature>
<feature type="binding site" evidence="1">
    <location>
        <position position="232"/>
    </location>
    <ligand>
        <name>ATP</name>
        <dbReference type="ChEBI" id="CHEBI:30616"/>
    </ligand>
</feature>
<feature type="binding site" evidence="1">
    <location>
        <position position="305"/>
    </location>
    <ligand>
        <name>DNA</name>
        <dbReference type="ChEBI" id="CHEBI:16991"/>
    </ligand>
</feature>
<feature type="binding site" evidence="1">
    <location>
        <position position="324"/>
    </location>
    <ligand>
        <name>DNA</name>
        <dbReference type="ChEBI" id="CHEBI:16991"/>
    </ligand>
</feature>
<feature type="binding site" evidence="1">
    <location>
        <position position="329"/>
    </location>
    <ligand>
        <name>DNA</name>
        <dbReference type="ChEBI" id="CHEBI:16991"/>
    </ligand>
</feature>